<accession>Q1MPX3</accession>
<gene>
    <name evidence="1" type="primary">ybeY</name>
    <name type="ordered locus">LI0900</name>
</gene>
<comment type="function">
    <text evidence="1">Single strand-specific metallo-endoribonuclease involved in late-stage 70S ribosome quality control and in maturation of the 3' terminus of the 16S rRNA.</text>
</comment>
<comment type="cofactor">
    <cofactor evidence="1">
        <name>Zn(2+)</name>
        <dbReference type="ChEBI" id="CHEBI:29105"/>
    </cofactor>
    <text evidence="1">Binds 1 zinc ion.</text>
</comment>
<comment type="subcellular location">
    <subcellularLocation>
        <location evidence="1">Cytoplasm</location>
    </subcellularLocation>
</comment>
<comment type="similarity">
    <text evidence="1">Belongs to the endoribonuclease YbeY family.</text>
</comment>
<dbReference type="EC" id="3.1.-.-" evidence="1"/>
<dbReference type="EMBL" id="AM180252">
    <property type="protein sequence ID" value="CAJ54954.1"/>
    <property type="molecule type" value="Genomic_DNA"/>
</dbReference>
<dbReference type="RefSeq" id="WP_011526983.1">
    <property type="nucleotide sequence ID" value="NC_008011.1"/>
</dbReference>
<dbReference type="SMR" id="Q1MPX3"/>
<dbReference type="STRING" id="363253.LI0900"/>
<dbReference type="KEGG" id="lip:LI0900"/>
<dbReference type="eggNOG" id="COG0319">
    <property type="taxonomic scope" value="Bacteria"/>
</dbReference>
<dbReference type="HOGENOM" id="CLU_106710_4_1_7"/>
<dbReference type="OrthoDB" id="9807740at2"/>
<dbReference type="Proteomes" id="UP000002430">
    <property type="component" value="Chromosome"/>
</dbReference>
<dbReference type="GO" id="GO:0005737">
    <property type="term" value="C:cytoplasm"/>
    <property type="evidence" value="ECO:0007669"/>
    <property type="project" value="UniProtKB-SubCell"/>
</dbReference>
<dbReference type="GO" id="GO:0004222">
    <property type="term" value="F:metalloendopeptidase activity"/>
    <property type="evidence" value="ECO:0007669"/>
    <property type="project" value="InterPro"/>
</dbReference>
<dbReference type="GO" id="GO:0004521">
    <property type="term" value="F:RNA endonuclease activity"/>
    <property type="evidence" value="ECO:0007669"/>
    <property type="project" value="UniProtKB-UniRule"/>
</dbReference>
<dbReference type="GO" id="GO:0008270">
    <property type="term" value="F:zinc ion binding"/>
    <property type="evidence" value="ECO:0007669"/>
    <property type="project" value="UniProtKB-UniRule"/>
</dbReference>
<dbReference type="GO" id="GO:0006364">
    <property type="term" value="P:rRNA processing"/>
    <property type="evidence" value="ECO:0007669"/>
    <property type="project" value="UniProtKB-UniRule"/>
</dbReference>
<dbReference type="Gene3D" id="3.40.390.30">
    <property type="entry name" value="Metalloproteases ('zincins'), catalytic domain"/>
    <property type="match status" value="1"/>
</dbReference>
<dbReference type="HAMAP" id="MF_00009">
    <property type="entry name" value="Endoribonucl_YbeY"/>
    <property type="match status" value="1"/>
</dbReference>
<dbReference type="InterPro" id="IPR023091">
    <property type="entry name" value="MetalPrtase_cat_dom_sf_prd"/>
</dbReference>
<dbReference type="InterPro" id="IPR002036">
    <property type="entry name" value="YbeY"/>
</dbReference>
<dbReference type="NCBIfam" id="TIGR00043">
    <property type="entry name" value="rRNA maturation RNase YbeY"/>
    <property type="match status" value="1"/>
</dbReference>
<dbReference type="Pfam" id="PF02130">
    <property type="entry name" value="YbeY"/>
    <property type="match status" value="1"/>
</dbReference>
<dbReference type="SUPFAM" id="SSF55486">
    <property type="entry name" value="Metalloproteases ('zincins'), catalytic domain"/>
    <property type="match status" value="1"/>
</dbReference>
<keyword id="KW-0963">Cytoplasm</keyword>
<keyword id="KW-0255">Endonuclease</keyword>
<keyword id="KW-0378">Hydrolase</keyword>
<keyword id="KW-0479">Metal-binding</keyword>
<keyword id="KW-0540">Nuclease</keyword>
<keyword id="KW-1185">Reference proteome</keyword>
<keyword id="KW-0690">Ribosome biogenesis</keyword>
<keyword id="KW-0698">rRNA processing</keyword>
<keyword id="KW-0862">Zinc</keyword>
<protein>
    <recommendedName>
        <fullName evidence="1">Endoribonuclease YbeY</fullName>
        <ecNumber evidence="1">3.1.-.-</ecNumber>
    </recommendedName>
</protein>
<evidence type="ECO:0000255" key="1">
    <source>
        <dbReference type="HAMAP-Rule" id="MF_00009"/>
    </source>
</evidence>
<sequence length="133" mass="15001">MAVILLGNEHIWKLPFCRLEFVAILEKMLSFAKLQTIEVYLVSDTTIAFFNLHYMNCLGITNVLSFPMDDEDLAGSIILSVDAVCRESLLYRQPILDYCLSLLSHGIAHIAGYTHGVEMDKFCSNLLLPFKLA</sequence>
<feature type="chain" id="PRO_0000284231" description="Endoribonuclease YbeY">
    <location>
        <begin position="1"/>
        <end position="133"/>
    </location>
</feature>
<feature type="binding site" evidence="1">
    <location>
        <position position="105"/>
    </location>
    <ligand>
        <name>Zn(2+)</name>
        <dbReference type="ChEBI" id="CHEBI:29105"/>
        <note>catalytic</note>
    </ligand>
</feature>
<feature type="binding site" evidence="1">
    <location>
        <position position="109"/>
    </location>
    <ligand>
        <name>Zn(2+)</name>
        <dbReference type="ChEBI" id="CHEBI:29105"/>
        <note>catalytic</note>
    </ligand>
</feature>
<feature type="binding site" evidence="1">
    <location>
        <position position="115"/>
    </location>
    <ligand>
        <name>Zn(2+)</name>
        <dbReference type="ChEBI" id="CHEBI:29105"/>
        <note>catalytic</note>
    </ligand>
</feature>
<proteinExistence type="inferred from homology"/>
<reference key="1">
    <citation type="submission" date="2005-11" db="EMBL/GenBank/DDBJ databases">
        <title>The complete genome sequence of Lawsonia intracellularis: the causative agent of proliferative enteropathy.</title>
        <authorList>
            <person name="Kaur K."/>
            <person name="Zhang Q."/>
            <person name="Beckler D."/>
            <person name="Munir S."/>
            <person name="Li L."/>
            <person name="Kinsley K."/>
            <person name="Herron L."/>
            <person name="Peterson A."/>
            <person name="May B."/>
            <person name="Singh S."/>
            <person name="Gebhart C."/>
            <person name="Kapur V."/>
        </authorList>
    </citation>
    <scope>NUCLEOTIDE SEQUENCE [LARGE SCALE GENOMIC DNA]</scope>
    <source>
        <strain>PHE/MN1-00</strain>
    </source>
</reference>
<name>YBEY_LAWIP</name>
<organism>
    <name type="scientific">Lawsonia intracellularis (strain PHE/MN1-00)</name>
    <dbReference type="NCBI Taxonomy" id="363253"/>
    <lineage>
        <taxon>Bacteria</taxon>
        <taxon>Pseudomonadati</taxon>
        <taxon>Thermodesulfobacteriota</taxon>
        <taxon>Desulfovibrionia</taxon>
        <taxon>Desulfovibrionales</taxon>
        <taxon>Desulfovibrionaceae</taxon>
        <taxon>Lawsonia</taxon>
    </lineage>
</organism>